<feature type="chain" id="PRO_1000198656" description="Pyrimidine/purine nucleoside phosphorylase">
    <location>
        <begin position="1"/>
        <end position="96"/>
    </location>
</feature>
<reference key="1">
    <citation type="journal article" date="2008" name="Environ. Microbiol.">
        <title>The genome of Erwinia tasmaniensis strain Et1/99, a non-pathogenic bacterium in the genus Erwinia.</title>
        <authorList>
            <person name="Kube M."/>
            <person name="Migdoll A.M."/>
            <person name="Mueller I."/>
            <person name="Kuhl H."/>
            <person name="Beck A."/>
            <person name="Reinhardt R."/>
            <person name="Geider K."/>
        </authorList>
    </citation>
    <scope>NUCLEOTIDE SEQUENCE [LARGE SCALE GENOMIC DNA]</scope>
    <source>
        <strain>DSM 17950 / CFBP 7177 / CIP 109463 / NCPPB 4357 / Et1/99</strain>
    </source>
</reference>
<keyword id="KW-0328">Glycosyltransferase</keyword>
<keyword id="KW-1185">Reference proteome</keyword>
<keyword id="KW-0808">Transferase</keyword>
<organism>
    <name type="scientific">Erwinia tasmaniensis (strain DSM 17950 / CFBP 7177 / CIP 109463 / NCPPB 4357 / Et1/99)</name>
    <dbReference type="NCBI Taxonomy" id="465817"/>
    <lineage>
        <taxon>Bacteria</taxon>
        <taxon>Pseudomonadati</taxon>
        <taxon>Pseudomonadota</taxon>
        <taxon>Gammaproteobacteria</taxon>
        <taxon>Enterobacterales</taxon>
        <taxon>Erwiniaceae</taxon>
        <taxon>Erwinia</taxon>
    </lineage>
</organism>
<name>PPNP_ERWT9</name>
<gene>
    <name evidence="1" type="primary">ppnP</name>
    <name type="ordered locus">ETA_25560</name>
</gene>
<proteinExistence type="inferred from homology"/>
<accession>B2VIS3</accession>
<protein>
    <recommendedName>
        <fullName evidence="1">Pyrimidine/purine nucleoside phosphorylase</fullName>
        <ecNumber evidence="1">2.4.2.1</ecNumber>
        <ecNumber evidence="1">2.4.2.2</ecNumber>
    </recommendedName>
    <alternativeName>
        <fullName evidence="1">Adenosine phosphorylase</fullName>
    </alternativeName>
    <alternativeName>
        <fullName evidence="1">Cytidine phosphorylase</fullName>
    </alternativeName>
    <alternativeName>
        <fullName evidence="1">Guanosine phosphorylase</fullName>
    </alternativeName>
    <alternativeName>
        <fullName evidence="1">Inosine phosphorylase</fullName>
    </alternativeName>
    <alternativeName>
        <fullName evidence="1">Thymidine phosphorylase</fullName>
    </alternativeName>
    <alternativeName>
        <fullName evidence="1">Uridine phosphorylase</fullName>
    </alternativeName>
    <alternativeName>
        <fullName evidence="1">Xanthosine phosphorylase</fullName>
    </alternativeName>
</protein>
<evidence type="ECO:0000255" key="1">
    <source>
        <dbReference type="HAMAP-Rule" id="MF_01537"/>
    </source>
</evidence>
<dbReference type="EC" id="2.4.2.1" evidence="1"/>
<dbReference type="EC" id="2.4.2.2" evidence="1"/>
<dbReference type="EMBL" id="CU468135">
    <property type="protein sequence ID" value="CAO97602.1"/>
    <property type="molecule type" value="Genomic_DNA"/>
</dbReference>
<dbReference type="RefSeq" id="WP_012442267.1">
    <property type="nucleotide sequence ID" value="NC_010694.1"/>
</dbReference>
<dbReference type="SMR" id="B2VIS3"/>
<dbReference type="STRING" id="465817.ETA_25560"/>
<dbReference type="KEGG" id="eta:ETA_25560"/>
<dbReference type="eggNOG" id="COG3123">
    <property type="taxonomic scope" value="Bacteria"/>
</dbReference>
<dbReference type="HOGENOM" id="CLU_157874_0_0_6"/>
<dbReference type="OrthoDB" id="9793848at2"/>
<dbReference type="Proteomes" id="UP000001726">
    <property type="component" value="Chromosome"/>
</dbReference>
<dbReference type="GO" id="GO:0005829">
    <property type="term" value="C:cytosol"/>
    <property type="evidence" value="ECO:0007669"/>
    <property type="project" value="TreeGrafter"/>
</dbReference>
<dbReference type="GO" id="GO:0047975">
    <property type="term" value="F:guanosine phosphorylase activity"/>
    <property type="evidence" value="ECO:0007669"/>
    <property type="project" value="UniProtKB-EC"/>
</dbReference>
<dbReference type="GO" id="GO:0004731">
    <property type="term" value="F:purine-nucleoside phosphorylase activity"/>
    <property type="evidence" value="ECO:0007669"/>
    <property type="project" value="UniProtKB-UniRule"/>
</dbReference>
<dbReference type="GO" id="GO:0009032">
    <property type="term" value="F:thymidine phosphorylase activity"/>
    <property type="evidence" value="ECO:0007669"/>
    <property type="project" value="UniProtKB-EC"/>
</dbReference>
<dbReference type="GO" id="GO:0004850">
    <property type="term" value="F:uridine phosphorylase activity"/>
    <property type="evidence" value="ECO:0007669"/>
    <property type="project" value="UniProtKB-EC"/>
</dbReference>
<dbReference type="CDD" id="cd20296">
    <property type="entry name" value="cupin_PpnP-like"/>
    <property type="match status" value="1"/>
</dbReference>
<dbReference type="FunFam" id="2.60.120.10:FF:000016">
    <property type="entry name" value="Pyrimidine/purine nucleoside phosphorylase"/>
    <property type="match status" value="1"/>
</dbReference>
<dbReference type="Gene3D" id="2.60.120.10">
    <property type="entry name" value="Jelly Rolls"/>
    <property type="match status" value="1"/>
</dbReference>
<dbReference type="HAMAP" id="MF_01537">
    <property type="entry name" value="Nucleos_phosphorylase_PpnP"/>
    <property type="match status" value="1"/>
</dbReference>
<dbReference type="InterPro" id="IPR009664">
    <property type="entry name" value="Ppnp"/>
</dbReference>
<dbReference type="InterPro" id="IPR014710">
    <property type="entry name" value="RmlC-like_jellyroll"/>
</dbReference>
<dbReference type="InterPro" id="IPR011051">
    <property type="entry name" value="RmlC_Cupin_sf"/>
</dbReference>
<dbReference type="NCBIfam" id="NF007875">
    <property type="entry name" value="PRK10579.1"/>
    <property type="match status" value="1"/>
</dbReference>
<dbReference type="PANTHER" id="PTHR36540">
    <property type="entry name" value="PYRIMIDINE/PURINE NUCLEOSIDE PHOSPHORYLASE"/>
    <property type="match status" value="1"/>
</dbReference>
<dbReference type="PANTHER" id="PTHR36540:SF1">
    <property type="entry name" value="PYRIMIDINE_PURINE NUCLEOSIDE PHOSPHORYLASE"/>
    <property type="match status" value="1"/>
</dbReference>
<dbReference type="Pfam" id="PF06865">
    <property type="entry name" value="Ppnp"/>
    <property type="match status" value="1"/>
</dbReference>
<dbReference type="SUPFAM" id="SSF51182">
    <property type="entry name" value="RmlC-like cupins"/>
    <property type="match status" value="1"/>
</dbReference>
<sequence>MLNVSEYFDGKVKSIGFESASAGRASVGVMAEGEYTFATAQAEEMTVVSGSLKVLLTGETDWKWYQAGEAFNVPGHSEFYLQVAEPTAYLCRYLKD</sequence>
<comment type="function">
    <text evidence="1">Catalyzes the phosphorolysis of diverse nucleosides, yielding D-ribose 1-phosphate and the respective free bases. Can use uridine, adenosine, guanosine, cytidine, thymidine, inosine and xanthosine as substrates. Also catalyzes the reverse reactions.</text>
</comment>
<comment type="catalytic activity">
    <reaction evidence="1">
        <text>a purine D-ribonucleoside + phosphate = a purine nucleobase + alpha-D-ribose 1-phosphate</text>
        <dbReference type="Rhea" id="RHEA:19805"/>
        <dbReference type="ChEBI" id="CHEBI:26386"/>
        <dbReference type="ChEBI" id="CHEBI:43474"/>
        <dbReference type="ChEBI" id="CHEBI:57720"/>
        <dbReference type="ChEBI" id="CHEBI:142355"/>
        <dbReference type="EC" id="2.4.2.1"/>
    </reaction>
</comment>
<comment type="catalytic activity">
    <reaction evidence="1">
        <text>adenosine + phosphate = alpha-D-ribose 1-phosphate + adenine</text>
        <dbReference type="Rhea" id="RHEA:27642"/>
        <dbReference type="ChEBI" id="CHEBI:16335"/>
        <dbReference type="ChEBI" id="CHEBI:16708"/>
        <dbReference type="ChEBI" id="CHEBI:43474"/>
        <dbReference type="ChEBI" id="CHEBI:57720"/>
        <dbReference type="EC" id="2.4.2.1"/>
    </reaction>
</comment>
<comment type="catalytic activity">
    <reaction evidence="1">
        <text>cytidine + phosphate = cytosine + alpha-D-ribose 1-phosphate</text>
        <dbReference type="Rhea" id="RHEA:52540"/>
        <dbReference type="ChEBI" id="CHEBI:16040"/>
        <dbReference type="ChEBI" id="CHEBI:17562"/>
        <dbReference type="ChEBI" id="CHEBI:43474"/>
        <dbReference type="ChEBI" id="CHEBI:57720"/>
        <dbReference type="EC" id="2.4.2.2"/>
    </reaction>
</comment>
<comment type="catalytic activity">
    <reaction evidence="1">
        <text>guanosine + phosphate = alpha-D-ribose 1-phosphate + guanine</text>
        <dbReference type="Rhea" id="RHEA:13233"/>
        <dbReference type="ChEBI" id="CHEBI:16235"/>
        <dbReference type="ChEBI" id="CHEBI:16750"/>
        <dbReference type="ChEBI" id="CHEBI:43474"/>
        <dbReference type="ChEBI" id="CHEBI:57720"/>
        <dbReference type="EC" id="2.4.2.1"/>
    </reaction>
</comment>
<comment type="catalytic activity">
    <reaction evidence="1">
        <text>inosine + phosphate = alpha-D-ribose 1-phosphate + hypoxanthine</text>
        <dbReference type="Rhea" id="RHEA:27646"/>
        <dbReference type="ChEBI" id="CHEBI:17368"/>
        <dbReference type="ChEBI" id="CHEBI:17596"/>
        <dbReference type="ChEBI" id="CHEBI:43474"/>
        <dbReference type="ChEBI" id="CHEBI:57720"/>
        <dbReference type="EC" id="2.4.2.1"/>
    </reaction>
</comment>
<comment type="catalytic activity">
    <reaction evidence="1">
        <text>thymidine + phosphate = 2-deoxy-alpha-D-ribose 1-phosphate + thymine</text>
        <dbReference type="Rhea" id="RHEA:16037"/>
        <dbReference type="ChEBI" id="CHEBI:17748"/>
        <dbReference type="ChEBI" id="CHEBI:17821"/>
        <dbReference type="ChEBI" id="CHEBI:43474"/>
        <dbReference type="ChEBI" id="CHEBI:57259"/>
        <dbReference type="EC" id="2.4.2.2"/>
    </reaction>
</comment>
<comment type="catalytic activity">
    <reaction evidence="1">
        <text>uridine + phosphate = alpha-D-ribose 1-phosphate + uracil</text>
        <dbReference type="Rhea" id="RHEA:24388"/>
        <dbReference type="ChEBI" id="CHEBI:16704"/>
        <dbReference type="ChEBI" id="CHEBI:17568"/>
        <dbReference type="ChEBI" id="CHEBI:43474"/>
        <dbReference type="ChEBI" id="CHEBI:57720"/>
        <dbReference type="EC" id="2.4.2.2"/>
    </reaction>
</comment>
<comment type="catalytic activity">
    <reaction evidence="1">
        <text>xanthosine + phosphate = alpha-D-ribose 1-phosphate + xanthine</text>
        <dbReference type="Rhea" id="RHEA:27638"/>
        <dbReference type="ChEBI" id="CHEBI:17712"/>
        <dbReference type="ChEBI" id="CHEBI:18107"/>
        <dbReference type="ChEBI" id="CHEBI:43474"/>
        <dbReference type="ChEBI" id="CHEBI:57720"/>
        <dbReference type="EC" id="2.4.2.1"/>
    </reaction>
</comment>
<comment type="similarity">
    <text evidence="1">Belongs to the nucleoside phosphorylase PpnP family.</text>
</comment>